<reference key="1">
    <citation type="journal article" date="1999" name="Nature">
        <title>Sequence and analysis of chromosome 2 of the plant Arabidopsis thaliana.</title>
        <authorList>
            <person name="Lin X."/>
            <person name="Kaul S."/>
            <person name="Rounsley S.D."/>
            <person name="Shea T.P."/>
            <person name="Benito M.-I."/>
            <person name="Town C.D."/>
            <person name="Fujii C.Y."/>
            <person name="Mason T.M."/>
            <person name="Bowman C.L."/>
            <person name="Barnstead M.E."/>
            <person name="Feldblyum T.V."/>
            <person name="Buell C.R."/>
            <person name="Ketchum K.A."/>
            <person name="Lee J.J."/>
            <person name="Ronning C.M."/>
            <person name="Koo H.L."/>
            <person name="Moffat K.S."/>
            <person name="Cronin L.A."/>
            <person name="Shen M."/>
            <person name="Pai G."/>
            <person name="Van Aken S."/>
            <person name="Umayam L."/>
            <person name="Tallon L.J."/>
            <person name="Gill J.E."/>
            <person name="Adams M.D."/>
            <person name="Carrera A.J."/>
            <person name="Creasy T.H."/>
            <person name="Goodman H.M."/>
            <person name="Somerville C.R."/>
            <person name="Copenhaver G.P."/>
            <person name="Preuss D."/>
            <person name="Nierman W.C."/>
            <person name="White O."/>
            <person name="Eisen J.A."/>
            <person name="Salzberg S.L."/>
            <person name="Fraser C.M."/>
            <person name="Venter J.C."/>
        </authorList>
    </citation>
    <scope>NUCLEOTIDE SEQUENCE [LARGE SCALE GENOMIC DNA]</scope>
    <source>
        <strain>cv. Columbia</strain>
    </source>
</reference>
<reference key="2">
    <citation type="journal article" date="2017" name="Plant J.">
        <title>Araport11: a complete reannotation of the Arabidopsis thaliana reference genome.</title>
        <authorList>
            <person name="Cheng C.Y."/>
            <person name="Krishnakumar V."/>
            <person name="Chan A.P."/>
            <person name="Thibaud-Nissen F."/>
            <person name="Schobel S."/>
            <person name="Town C.D."/>
        </authorList>
    </citation>
    <scope>GENOME REANNOTATION</scope>
    <source>
        <strain>cv. Columbia</strain>
    </source>
</reference>
<accession>Q3E6P4</accession>
<organism>
    <name type="scientific">Arabidopsis thaliana</name>
    <name type="common">Mouse-ear cress</name>
    <dbReference type="NCBI Taxonomy" id="3702"/>
    <lineage>
        <taxon>Eukaryota</taxon>
        <taxon>Viridiplantae</taxon>
        <taxon>Streptophyta</taxon>
        <taxon>Embryophyta</taxon>
        <taxon>Tracheophyta</taxon>
        <taxon>Spermatophyta</taxon>
        <taxon>Magnoliopsida</taxon>
        <taxon>eudicotyledons</taxon>
        <taxon>Gunneridae</taxon>
        <taxon>Pentapetalae</taxon>
        <taxon>rosids</taxon>
        <taxon>malvids</taxon>
        <taxon>Brassicales</taxon>
        <taxon>Brassicaceae</taxon>
        <taxon>Camelineae</taxon>
        <taxon>Arabidopsis</taxon>
    </lineage>
</organism>
<gene>
    <name type="ordered locus">At2g02240</name>
    <name type="ORF">T16F16.3</name>
</gene>
<proteinExistence type="evidence at transcript level"/>
<dbReference type="EMBL" id="AC005312">
    <property type="status" value="NOT_ANNOTATED_CDS"/>
    <property type="molecule type" value="Genomic_DNA"/>
</dbReference>
<dbReference type="EMBL" id="CP002685">
    <property type="protein sequence ID" value="AEC05560.1"/>
    <property type="molecule type" value="Genomic_DNA"/>
</dbReference>
<dbReference type="RefSeq" id="NP_973399.1">
    <property type="nucleotide sequence ID" value="NM_201670.2"/>
</dbReference>
<dbReference type="SMR" id="Q3E6P4"/>
<dbReference type="FunCoup" id="Q3E6P4">
    <property type="interactions" value="31"/>
</dbReference>
<dbReference type="PaxDb" id="3702-AT2G02240.1"/>
<dbReference type="ProteomicsDB" id="230086"/>
<dbReference type="EnsemblPlants" id="AT2G02240.1">
    <property type="protein sequence ID" value="AT2G02240.1"/>
    <property type="gene ID" value="AT2G02240"/>
</dbReference>
<dbReference type="GeneID" id="814755"/>
<dbReference type="Gramene" id="AT2G02240.1">
    <property type="protein sequence ID" value="AT2G02240.1"/>
    <property type="gene ID" value="AT2G02240"/>
</dbReference>
<dbReference type="KEGG" id="ath:AT2G02240"/>
<dbReference type="Araport" id="AT2G02240"/>
<dbReference type="TAIR" id="AT2G02240">
    <property type="gene designation" value="MEE66"/>
</dbReference>
<dbReference type="eggNOG" id="ENOG502QRA4">
    <property type="taxonomic scope" value="Eukaryota"/>
</dbReference>
<dbReference type="HOGENOM" id="CLU_050973_0_0_1"/>
<dbReference type="InParanoid" id="Q3E6P4"/>
<dbReference type="OMA" id="SNMWKHG"/>
<dbReference type="PhylomeDB" id="Q3E6P4"/>
<dbReference type="PRO" id="PR:Q3E6P4"/>
<dbReference type="Proteomes" id="UP000006548">
    <property type="component" value="Chromosome 2"/>
</dbReference>
<dbReference type="ExpressionAtlas" id="Q3E6P4">
    <property type="expression patterns" value="baseline and differential"/>
</dbReference>
<dbReference type="GO" id="GO:0009793">
    <property type="term" value="P:embryo development ending in seed dormancy"/>
    <property type="evidence" value="ECO:0000315"/>
    <property type="project" value="TAIR"/>
</dbReference>
<dbReference type="CDD" id="cd22162">
    <property type="entry name" value="F-box_AtSKIP3-like"/>
    <property type="match status" value="1"/>
</dbReference>
<dbReference type="FunFam" id="1.20.1280.50:FF:000112">
    <property type="entry name" value="F-box protein PP2-B1"/>
    <property type="match status" value="1"/>
</dbReference>
<dbReference type="Gene3D" id="1.20.1280.50">
    <property type="match status" value="1"/>
</dbReference>
<dbReference type="InterPro" id="IPR036047">
    <property type="entry name" value="F-box-like_dom_sf"/>
</dbReference>
<dbReference type="InterPro" id="IPR001810">
    <property type="entry name" value="F-box_dom"/>
</dbReference>
<dbReference type="InterPro" id="IPR025886">
    <property type="entry name" value="PP2-like"/>
</dbReference>
<dbReference type="PANTHER" id="PTHR32278">
    <property type="entry name" value="F-BOX DOMAIN-CONTAINING PROTEIN"/>
    <property type="match status" value="1"/>
</dbReference>
<dbReference type="PANTHER" id="PTHR32278:SF57">
    <property type="entry name" value="F-BOX PROTEIN PP2-B2-RELATED"/>
    <property type="match status" value="1"/>
</dbReference>
<dbReference type="Pfam" id="PF00646">
    <property type="entry name" value="F-box"/>
    <property type="match status" value="1"/>
</dbReference>
<dbReference type="Pfam" id="PF14299">
    <property type="entry name" value="PP2"/>
    <property type="match status" value="1"/>
</dbReference>
<dbReference type="SMART" id="SM00256">
    <property type="entry name" value="FBOX"/>
    <property type="match status" value="1"/>
</dbReference>
<dbReference type="SUPFAM" id="SSF81383">
    <property type="entry name" value="F-box domain"/>
    <property type="match status" value="1"/>
</dbReference>
<dbReference type="PROSITE" id="PS50181">
    <property type="entry name" value="FBOX"/>
    <property type="match status" value="1"/>
</dbReference>
<protein>
    <recommendedName>
        <fullName>F-box protein At2g02240</fullName>
    </recommendedName>
</protein>
<sequence length="320" mass="36718">MCGQHYTSIISSITTEASFERVRTHEFIKFSKHKRFDQRHRSMMGQYHSGGEIVSPGTSPFDVLPEDCISNIISFTSPRDACVAASVSKTFESAVSSDCVWDKFLPPEYESLVSRSRVFASKKELYFALCHNPVLIEDGKKSFWLEKASGKRCIMLSSKELWITWGSSPEYWQWISIPESRFNKIAELLDVCWFEIRGKTSARVLSPGTRYSAYIVFKTKDRCPGLGHLPVEVGLGLVGQESSKRFIYFIGPRDRRGRRETRDVTKPDQREDGWMEAELGEFFNEERCDEIEFSVIEIKSPSWKSGLIIQGIEFRPTKSQ</sequence>
<keyword id="KW-1185">Reference proteome</keyword>
<feature type="chain" id="PRO_0000283368" description="F-box protein At2g02240">
    <location>
        <begin position="1"/>
        <end position="320"/>
    </location>
</feature>
<feature type="domain" description="F-box" evidence="1">
    <location>
        <begin position="58"/>
        <end position="104"/>
    </location>
</feature>
<evidence type="ECO:0000255" key="1">
    <source>
        <dbReference type="PROSITE-ProRule" id="PRU00080"/>
    </source>
</evidence>
<name>FB95_ARATH</name>